<protein>
    <recommendedName>
        <fullName>Putative autophagy-related protein 8E</fullName>
    </recommendedName>
    <alternativeName>
        <fullName>Autophagy-related ubiquitin-like modifier ATG8E</fullName>
    </alternativeName>
</protein>
<keyword id="KW-0072">Autophagy</keyword>
<keyword id="KW-0963">Cytoplasm</keyword>
<keyword id="KW-0968">Cytoplasmic vesicle</keyword>
<keyword id="KW-0206">Cytoskeleton</keyword>
<keyword id="KW-0449">Lipoprotein</keyword>
<keyword id="KW-0472">Membrane</keyword>
<keyword id="KW-0493">Microtubule</keyword>
<keyword id="KW-0653">Protein transport</keyword>
<keyword id="KW-1185">Reference proteome</keyword>
<keyword id="KW-0813">Transport</keyword>
<keyword id="KW-0833">Ubl conjugation pathway</keyword>
<keyword id="KW-0926">Vacuole</keyword>
<proteinExistence type="inferred from homology"/>
<accession>Q6H6P0</accession>
<name>ATG8E_ORYSJ</name>
<reference key="1">
    <citation type="journal article" date="2005" name="Nature">
        <title>The map-based sequence of the rice genome.</title>
        <authorList>
            <consortium name="International rice genome sequencing project (IRGSP)"/>
        </authorList>
    </citation>
    <scope>NUCLEOTIDE SEQUENCE [LARGE SCALE GENOMIC DNA]</scope>
    <source>
        <strain>cv. Nipponbare</strain>
    </source>
</reference>
<reference key="2">
    <citation type="journal article" date="2013" name="Rice">
        <title>Improvement of the Oryza sativa Nipponbare reference genome using next generation sequence and optical map data.</title>
        <authorList>
            <person name="Kawahara Y."/>
            <person name="de la Bastide M."/>
            <person name="Hamilton J.P."/>
            <person name="Kanamori H."/>
            <person name="McCombie W.R."/>
            <person name="Ouyang S."/>
            <person name="Schwartz D.C."/>
            <person name="Tanaka T."/>
            <person name="Wu J."/>
            <person name="Zhou S."/>
            <person name="Childs K.L."/>
            <person name="Davidson R.M."/>
            <person name="Lin H."/>
            <person name="Quesada-Ocampo L."/>
            <person name="Vaillancourt B."/>
            <person name="Sakai H."/>
            <person name="Lee S.S."/>
            <person name="Kim J."/>
            <person name="Numa H."/>
            <person name="Itoh T."/>
            <person name="Buell C.R."/>
            <person name="Matsumoto T."/>
        </authorList>
    </citation>
    <scope>GENOME REANNOTATION</scope>
    <source>
        <strain>cv. Nipponbare</strain>
    </source>
</reference>
<gene>
    <name type="primary">ATG8E</name>
    <name type="synonym">APG8E</name>
    <name type="ordered locus">Os02g0529150</name>
    <name type="ordered locus">LOC_Os02g32700</name>
    <name type="ORF">P0475F05.30</name>
    <name type="ORF">P0476H10.14</name>
</gene>
<sequence length="87" mass="9906">MEERRKEKGKEGRRGKATGHSVDKFSRSNLPEMEKRKLHLPPGTALFVFVNNTLPQTAQLMGSVYESYKDEGDGFLYLCYSSEKTFG</sequence>
<dbReference type="EMBL" id="AP004790">
    <property type="protein sequence ID" value="BAD25426.1"/>
    <property type="status" value="ALT_SEQ"/>
    <property type="molecule type" value="Genomic_DNA"/>
</dbReference>
<dbReference type="EMBL" id="AP004879">
    <property type="protein sequence ID" value="BAD25609.1"/>
    <property type="status" value="ALT_SEQ"/>
    <property type="molecule type" value="Genomic_DNA"/>
</dbReference>
<dbReference type="EMBL" id="AP014958">
    <property type="status" value="NOT_ANNOTATED_CDS"/>
    <property type="molecule type" value="Genomic_DNA"/>
</dbReference>
<dbReference type="SMR" id="Q6H6P0"/>
<dbReference type="STRING" id="39947.Q6H6P0"/>
<dbReference type="PaxDb" id="39947-Q6H6P0"/>
<dbReference type="InParanoid" id="Q6H6P0"/>
<dbReference type="Proteomes" id="UP000000763">
    <property type="component" value="Chromosome 2"/>
</dbReference>
<dbReference type="Proteomes" id="UP000059680">
    <property type="component" value="Chromosome 2"/>
</dbReference>
<dbReference type="GO" id="GO:0000421">
    <property type="term" value="C:autophagosome membrane"/>
    <property type="evidence" value="ECO:0000318"/>
    <property type="project" value="GO_Central"/>
</dbReference>
<dbReference type="GO" id="GO:0031410">
    <property type="term" value="C:cytoplasmic vesicle"/>
    <property type="evidence" value="ECO:0007669"/>
    <property type="project" value="UniProtKB-KW"/>
</dbReference>
<dbReference type="GO" id="GO:0005874">
    <property type="term" value="C:microtubule"/>
    <property type="evidence" value="ECO:0007669"/>
    <property type="project" value="UniProtKB-KW"/>
</dbReference>
<dbReference type="GO" id="GO:0008429">
    <property type="term" value="F:phosphatidylethanolamine binding"/>
    <property type="evidence" value="ECO:0000318"/>
    <property type="project" value="GO_Central"/>
</dbReference>
<dbReference type="GO" id="GO:0000045">
    <property type="term" value="P:autophagosome assembly"/>
    <property type="evidence" value="ECO:0000318"/>
    <property type="project" value="GO_Central"/>
</dbReference>
<dbReference type="GO" id="GO:0097352">
    <property type="term" value="P:autophagosome maturation"/>
    <property type="evidence" value="ECO:0000318"/>
    <property type="project" value="GO_Central"/>
</dbReference>
<dbReference type="GO" id="GO:0006995">
    <property type="term" value="P:cellular response to nitrogen starvation"/>
    <property type="evidence" value="ECO:0000318"/>
    <property type="project" value="GO_Central"/>
</dbReference>
<dbReference type="GO" id="GO:0000423">
    <property type="term" value="P:mitophagy"/>
    <property type="evidence" value="ECO:0000318"/>
    <property type="project" value="GO_Central"/>
</dbReference>
<dbReference type="GO" id="GO:0015031">
    <property type="term" value="P:protein transport"/>
    <property type="evidence" value="ECO:0007669"/>
    <property type="project" value="UniProtKB-KW"/>
</dbReference>
<dbReference type="FunFam" id="3.10.20.90:FF:000584">
    <property type="entry name" value="Autophagy-related protein"/>
    <property type="match status" value="1"/>
</dbReference>
<dbReference type="Gene3D" id="3.10.20.90">
    <property type="entry name" value="Phosphatidylinositol 3-kinase Catalytic Subunit, Chain A, domain 1"/>
    <property type="match status" value="1"/>
</dbReference>
<dbReference type="InterPro" id="IPR004241">
    <property type="entry name" value="Atg8-like"/>
</dbReference>
<dbReference type="InterPro" id="IPR029071">
    <property type="entry name" value="Ubiquitin-like_domsf"/>
</dbReference>
<dbReference type="PANTHER" id="PTHR10969">
    <property type="entry name" value="MICROTUBULE-ASSOCIATED PROTEINS 1A/1B LIGHT CHAIN 3-RELATED"/>
    <property type="match status" value="1"/>
</dbReference>
<dbReference type="Pfam" id="PF02991">
    <property type="entry name" value="ATG8"/>
    <property type="match status" value="1"/>
</dbReference>
<dbReference type="SUPFAM" id="SSF54236">
    <property type="entry name" value="Ubiquitin-like"/>
    <property type="match status" value="1"/>
</dbReference>
<organism>
    <name type="scientific">Oryza sativa subsp. japonica</name>
    <name type="common">Rice</name>
    <dbReference type="NCBI Taxonomy" id="39947"/>
    <lineage>
        <taxon>Eukaryota</taxon>
        <taxon>Viridiplantae</taxon>
        <taxon>Streptophyta</taxon>
        <taxon>Embryophyta</taxon>
        <taxon>Tracheophyta</taxon>
        <taxon>Spermatophyta</taxon>
        <taxon>Magnoliopsida</taxon>
        <taxon>Liliopsida</taxon>
        <taxon>Poales</taxon>
        <taxon>Poaceae</taxon>
        <taxon>BOP clade</taxon>
        <taxon>Oryzoideae</taxon>
        <taxon>Oryzeae</taxon>
        <taxon>Oryzinae</taxon>
        <taxon>Oryza</taxon>
        <taxon>Oryza sativa</taxon>
    </lineage>
</organism>
<feature type="chain" id="PRO_0000286934" description="Putative autophagy-related protein 8E">
    <location>
        <begin position="1"/>
        <end position="87"/>
    </location>
</feature>
<feature type="region of interest" description="Disordered" evidence="4">
    <location>
        <begin position="1"/>
        <end position="30"/>
    </location>
</feature>
<feature type="compositionally biased region" description="Basic and acidic residues" evidence="4">
    <location>
        <begin position="1"/>
        <end position="14"/>
    </location>
</feature>
<feature type="lipid moiety-binding region" description="Phosphatidylethanolamine amidated glycine" evidence="1">
    <location>
        <position position="87"/>
    </location>
</feature>
<comment type="function">
    <text evidence="1">Ubiquitin-like modifier involved in autophagosomes formation. May mediate the delivery of the autophagosomes to the vacuole via the microtubule cytoskeleton.</text>
</comment>
<comment type="subunit">
    <text evidence="2">Interacts with ATG4.</text>
</comment>
<comment type="subcellular location">
    <subcellularLocation>
        <location evidence="1">Cytoplasmic vesicle</location>
        <location evidence="1">Autophagosome membrane</location>
        <topology evidence="1">Lipid-anchor</topology>
    </subcellularLocation>
    <subcellularLocation>
        <location evidence="1">Vacuole membrane</location>
        <topology evidence="1">Lipid-anchor</topology>
    </subcellularLocation>
    <subcellularLocation>
        <location evidence="3">Cytoplasm</location>
        <location evidence="3">Cytoskeleton</location>
    </subcellularLocation>
</comment>
<comment type="PTM">
    <text evidence="1">The C-terminal Gly is amidated with phosphatidylethanolamine by an activating system similar to that for ubiquitin.</text>
</comment>
<comment type="similarity">
    <text evidence="5">Belongs to the ATG8 family.</text>
</comment>
<comment type="sequence caution" evidence="5">
    <conflict type="erroneous gene model prediction">
        <sequence resource="EMBL-CDS" id="BAD25426"/>
    </conflict>
</comment>
<comment type="sequence caution" evidence="5">
    <conflict type="erroneous gene model prediction">
        <sequence resource="EMBL-CDS" id="BAD25609"/>
    </conflict>
</comment>
<evidence type="ECO:0000250" key="1">
    <source>
        <dbReference type="UniProtKB" id="P38182"/>
    </source>
</evidence>
<evidence type="ECO:0000250" key="2">
    <source>
        <dbReference type="UniProtKB" id="Q2XPP5"/>
    </source>
</evidence>
<evidence type="ECO:0000250" key="3">
    <source>
        <dbReference type="UniProtKB" id="Q8LEM4"/>
    </source>
</evidence>
<evidence type="ECO:0000256" key="4">
    <source>
        <dbReference type="SAM" id="MobiDB-lite"/>
    </source>
</evidence>
<evidence type="ECO:0000305" key="5"/>